<protein>
    <recommendedName>
        <fullName evidence="1">Aminomethyltransferase</fullName>
        <ecNumber evidence="1">2.1.2.10</ecNumber>
    </recommendedName>
    <alternativeName>
        <fullName evidence="1">Glycine cleavage system T protein</fullName>
    </alternativeName>
</protein>
<evidence type="ECO:0000255" key="1">
    <source>
        <dbReference type="HAMAP-Rule" id="MF_00259"/>
    </source>
</evidence>
<feature type="chain" id="PRO_1000047668" description="Aminomethyltransferase">
    <location>
        <begin position="1"/>
        <end position="358"/>
    </location>
</feature>
<gene>
    <name evidence="1" type="primary">gcvT</name>
    <name type="ordered locus">FTL_0477</name>
</gene>
<name>GCST_FRATH</name>
<sequence length="358" mass="39516">MLKTPLYESHIAANAKMIDFSGWSMPINYGSQIQEHNNVREDCGIFDVSHMLAVDIQGSEAEKFLRYLLANDVAKLQENKAQYGCMLNHDAGIVDDLITYKVTDEHFRIVVNAGNRESDVAWFNQNAQNFDVAITPQTDLAIVAVQGPKAVAVIKRVVTKEIAAEIEALLPFSFKFFSKWMVARTGYTGEDGFEVILPATQVKKFWDSLLENGAQPAGLGARDTLRLEAGMHLYGADMDTSTTPLERGLGWSVDLSDEHRDFIGKKAYLAKKAQGVDTKWVGVVLKTKGVLRAGQEIDFDNGEKGYITSGSFSPTLKVAIGLAYVPKQADNPVVNIRGKELEVELVKPKFVKNGKSLI</sequence>
<organism>
    <name type="scientific">Francisella tularensis subsp. holarctica (strain LVS)</name>
    <dbReference type="NCBI Taxonomy" id="376619"/>
    <lineage>
        <taxon>Bacteria</taxon>
        <taxon>Pseudomonadati</taxon>
        <taxon>Pseudomonadota</taxon>
        <taxon>Gammaproteobacteria</taxon>
        <taxon>Thiotrichales</taxon>
        <taxon>Francisellaceae</taxon>
        <taxon>Francisella</taxon>
    </lineage>
</organism>
<comment type="function">
    <text evidence="1">The glycine cleavage system catalyzes the degradation of glycine.</text>
</comment>
<comment type="catalytic activity">
    <reaction evidence="1">
        <text>N(6)-[(R)-S(8)-aminomethyldihydrolipoyl]-L-lysyl-[protein] + (6S)-5,6,7,8-tetrahydrofolate = N(6)-[(R)-dihydrolipoyl]-L-lysyl-[protein] + (6R)-5,10-methylene-5,6,7,8-tetrahydrofolate + NH4(+)</text>
        <dbReference type="Rhea" id="RHEA:16945"/>
        <dbReference type="Rhea" id="RHEA-COMP:10475"/>
        <dbReference type="Rhea" id="RHEA-COMP:10492"/>
        <dbReference type="ChEBI" id="CHEBI:15636"/>
        <dbReference type="ChEBI" id="CHEBI:28938"/>
        <dbReference type="ChEBI" id="CHEBI:57453"/>
        <dbReference type="ChEBI" id="CHEBI:83100"/>
        <dbReference type="ChEBI" id="CHEBI:83143"/>
        <dbReference type="EC" id="2.1.2.10"/>
    </reaction>
</comment>
<comment type="subunit">
    <text evidence="1">The glycine cleavage system is composed of four proteins: P, T, L and H.</text>
</comment>
<comment type="similarity">
    <text evidence="1">Belongs to the GcvT family.</text>
</comment>
<keyword id="KW-0032">Aminotransferase</keyword>
<keyword id="KW-1185">Reference proteome</keyword>
<keyword id="KW-0808">Transferase</keyword>
<proteinExistence type="inferred from homology"/>
<reference key="1">
    <citation type="submission" date="2006-03" db="EMBL/GenBank/DDBJ databases">
        <title>Complete genome sequence of Francisella tularensis LVS (Live Vaccine Strain).</title>
        <authorList>
            <person name="Chain P."/>
            <person name="Larimer F."/>
            <person name="Land M."/>
            <person name="Stilwagen S."/>
            <person name="Larsson P."/>
            <person name="Bearden S."/>
            <person name="Chu M."/>
            <person name="Oyston P."/>
            <person name="Forsman M."/>
            <person name="Andersson S."/>
            <person name="Lindler L."/>
            <person name="Titball R."/>
            <person name="Garcia E."/>
        </authorList>
    </citation>
    <scope>NUCLEOTIDE SEQUENCE [LARGE SCALE GENOMIC DNA]</scope>
    <source>
        <strain>LVS</strain>
    </source>
</reference>
<accession>Q2A4V3</accession>
<dbReference type="EC" id="2.1.2.10" evidence="1"/>
<dbReference type="EMBL" id="AM233362">
    <property type="protein sequence ID" value="CAJ78917.1"/>
    <property type="molecule type" value="Genomic_DNA"/>
</dbReference>
<dbReference type="RefSeq" id="WP_004336875.1">
    <property type="nucleotide sequence ID" value="NZ_CP009694.1"/>
</dbReference>
<dbReference type="SMR" id="Q2A4V3"/>
<dbReference type="KEGG" id="ftl:FTL_0477"/>
<dbReference type="Proteomes" id="UP000001944">
    <property type="component" value="Chromosome"/>
</dbReference>
<dbReference type="GO" id="GO:0005829">
    <property type="term" value="C:cytosol"/>
    <property type="evidence" value="ECO:0007669"/>
    <property type="project" value="TreeGrafter"/>
</dbReference>
<dbReference type="GO" id="GO:0005960">
    <property type="term" value="C:glycine cleavage complex"/>
    <property type="evidence" value="ECO:0007669"/>
    <property type="project" value="InterPro"/>
</dbReference>
<dbReference type="GO" id="GO:0004047">
    <property type="term" value="F:aminomethyltransferase activity"/>
    <property type="evidence" value="ECO:0007669"/>
    <property type="project" value="UniProtKB-UniRule"/>
</dbReference>
<dbReference type="GO" id="GO:0008483">
    <property type="term" value="F:transaminase activity"/>
    <property type="evidence" value="ECO:0007669"/>
    <property type="project" value="UniProtKB-KW"/>
</dbReference>
<dbReference type="GO" id="GO:0019464">
    <property type="term" value="P:glycine decarboxylation via glycine cleavage system"/>
    <property type="evidence" value="ECO:0007669"/>
    <property type="project" value="UniProtKB-UniRule"/>
</dbReference>
<dbReference type="FunFam" id="3.30.70.1400:FF:000001">
    <property type="entry name" value="Aminomethyltransferase"/>
    <property type="match status" value="1"/>
</dbReference>
<dbReference type="FunFam" id="4.10.1250.10:FF:000001">
    <property type="entry name" value="Aminomethyltransferase"/>
    <property type="match status" value="1"/>
</dbReference>
<dbReference type="Gene3D" id="2.40.30.110">
    <property type="entry name" value="Aminomethyltransferase beta-barrel domains"/>
    <property type="match status" value="1"/>
</dbReference>
<dbReference type="Gene3D" id="3.30.70.1400">
    <property type="entry name" value="Aminomethyltransferase beta-barrel domains"/>
    <property type="match status" value="1"/>
</dbReference>
<dbReference type="Gene3D" id="4.10.1250.10">
    <property type="entry name" value="Aminomethyltransferase fragment"/>
    <property type="match status" value="1"/>
</dbReference>
<dbReference type="Gene3D" id="3.30.1360.120">
    <property type="entry name" value="Probable tRNA modification gtpase trme, domain 1"/>
    <property type="match status" value="1"/>
</dbReference>
<dbReference type="HAMAP" id="MF_00259">
    <property type="entry name" value="GcvT"/>
    <property type="match status" value="1"/>
</dbReference>
<dbReference type="InterPro" id="IPR006223">
    <property type="entry name" value="GCS_T"/>
</dbReference>
<dbReference type="InterPro" id="IPR022903">
    <property type="entry name" value="GCS_T_bac"/>
</dbReference>
<dbReference type="InterPro" id="IPR013977">
    <property type="entry name" value="GCST_C"/>
</dbReference>
<dbReference type="InterPro" id="IPR006222">
    <property type="entry name" value="GCV_T_N"/>
</dbReference>
<dbReference type="InterPro" id="IPR028896">
    <property type="entry name" value="GcvT/YgfZ/DmdA"/>
</dbReference>
<dbReference type="InterPro" id="IPR029043">
    <property type="entry name" value="GcvT/YgfZ_C"/>
</dbReference>
<dbReference type="InterPro" id="IPR027266">
    <property type="entry name" value="TrmE/GcvT_dom1"/>
</dbReference>
<dbReference type="NCBIfam" id="TIGR00528">
    <property type="entry name" value="gcvT"/>
    <property type="match status" value="1"/>
</dbReference>
<dbReference type="NCBIfam" id="NF001567">
    <property type="entry name" value="PRK00389.1"/>
    <property type="match status" value="1"/>
</dbReference>
<dbReference type="PANTHER" id="PTHR43757">
    <property type="entry name" value="AMINOMETHYLTRANSFERASE"/>
    <property type="match status" value="1"/>
</dbReference>
<dbReference type="PANTHER" id="PTHR43757:SF2">
    <property type="entry name" value="AMINOMETHYLTRANSFERASE, MITOCHONDRIAL"/>
    <property type="match status" value="1"/>
</dbReference>
<dbReference type="Pfam" id="PF01571">
    <property type="entry name" value="GCV_T"/>
    <property type="match status" value="1"/>
</dbReference>
<dbReference type="Pfam" id="PF08669">
    <property type="entry name" value="GCV_T_C"/>
    <property type="match status" value="1"/>
</dbReference>
<dbReference type="PIRSF" id="PIRSF006487">
    <property type="entry name" value="GcvT"/>
    <property type="match status" value="1"/>
</dbReference>
<dbReference type="SUPFAM" id="SSF101790">
    <property type="entry name" value="Aminomethyltransferase beta-barrel domain"/>
    <property type="match status" value="1"/>
</dbReference>
<dbReference type="SUPFAM" id="SSF103025">
    <property type="entry name" value="Folate-binding domain"/>
    <property type="match status" value="1"/>
</dbReference>